<reference key="1">
    <citation type="journal article" date="2003" name="Proc. Natl. Acad. Sci. U.S.A.">
        <title>Complete genome sequence and analysis of Wolinella succinogenes.</title>
        <authorList>
            <person name="Baar C."/>
            <person name="Eppinger M."/>
            <person name="Raddatz G."/>
            <person name="Simon J."/>
            <person name="Lanz C."/>
            <person name="Klimmek O."/>
            <person name="Nandakumar R."/>
            <person name="Gross R."/>
            <person name="Rosinus A."/>
            <person name="Keller H."/>
            <person name="Jagtap P."/>
            <person name="Linke B."/>
            <person name="Meyer F."/>
            <person name="Lederer H."/>
            <person name="Schuster S.C."/>
        </authorList>
    </citation>
    <scope>NUCLEOTIDE SEQUENCE [LARGE SCALE GENOMIC DNA]</scope>
    <source>
        <strain>ATCC 29543 / DSM 1740 / CCUG 13145 / JCM 31913 / LMG 7466 / NCTC 11488 / FDC 602W</strain>
    </source>
</reference>
<protein>
    <recommendedName>
        <fullName evidence="1">dCTP deaminase</fullName>
        <ecNumber evidence="1">3.5.4.13</ecNumber>
    </recommendedName>
    <alternativeName>
        <fullName evidence="1">Deoxycytidine triphosphate deaminase</fullName>
    </alternativeName>
</protein>
<gene>
    <name evidence="1" type="primary">dcd</name>
    <name type="ordered locus">WS1071</name>
</gene>
<comment type="function">
    <text evidence="1">Catalyzes the deamination of dCTP to dUTP.</text>
</comment>
<comment type="catalytic activity">
    <reaction evidence="1">
        <text>dCTP + H2O + H(+) = dUTP + NH4(+)</text>
        <dbReference type="Rhea" id="RHEA:22680"/>
        <dbReference type="ChEBI" id="CHEBI:15377"/>
        <dbReference type="ChEBI" id="CHEBI:15378"/>
        <dbReference type="ChEBI" id="CHEBI:28938"/>
        <dbReference type="ChEBI" id="CHEBI:61481"/>
        <dbReference type="ChEBI" id="CHEBI:61555"/>
        <dbReference type="EC" id="3.5.4.13"/>
    </reaction>
</comment>
<comment type="pathway">
    <text evidence="1">Pyrimidine metabolism; dUMP biosynthesis; dUMP from dCTP (dUTP route): step 1/2.</text>
</comment>
<comment type="subunit">
    <text evidence="1">Homotrimer.</text>
</comment>
<comment type="similarity">
    <text evidence="1">Belongs to the dCTP deaminase family.</text>
</comment>
<sequence length="186" mass="20875">MGLKEDRWITDMALPHNMIEPFCENQVGKNVVSYGLSSYGYDIRVSNEFKIFTNINATVVDPKNFDEANVVDFIGDICIVPPNSFALARTVEYFRIPRDVLAICLGKSTYARCGIIVNVTPFEPEFEGHITIEISNTTPLPAKIYANEGIAQVLFLQGDADCEVSYKDKKGKYQKQEGITLPRILK</sequence>
<proteinExistence type="inferred from homology"/>
<dbReference type="EC" id="3.5.4.13" evidence="1"/>
<dbReference type="EMBL" id="BX571659">
    <property type="protein sequence ID" value="CAE10169.1"/>
    <property type="molecule type" value="Genomic_DNA"/>
</dbReference>
<dbReference type="RefSeq" id="WP_011138962.1">
    <property type="nucleotide sequence ID" value="NC_005090.1"/>
</dbReference>
<dbReference type="SMR" id="Q7M9A0"/>
<dbReference type="STRING" id="273121.WS1071"/>
<dbReference type="KEGG" id="wsu:WS1071"/>
<dbReference type="eggNOG" id="COG0717">
    <property type="taxonomic scope" value="Bacteria"/>
</dbReference>
<dbReference type="HOGENOM" id="CLU_087476_4_0_7"/>
<dbReference type="UniPathway" id="UPA00610">
    <property type="reaction ID" value="UER00665"/>
</dbReference>
<dbReference type="Proteomes" id="UP000000422">
    <property type="component" value="Chromosome"/>
</dbReference>
<dbReference type="GO" id="GO:0008829">
    <property type="term" value="F:dCTP deaminase activity"/>
    <property type="evidence" value="ECO:0007669"/>
    <property type="project" value="UniProtKB-UniRule"/>
</dbReference>
<dbReference type="GO" id="GO:0000166">
    <property type="term" value="F:nucleotide binding"/>
    <property type="evidence" value="ECO:0007669"/>
    <property type="project" value="UniProtKB-KW"/>
</dbReference>
<dbReference type="GO" id="GO:0006226">
    <property type="term" value="P:dUMP biosynthetic process"/>
    <property type="evidence" value="ECO:0007669"/>
    <property type="project" value="UniProtKB-UniPathway"/>
</dbReference>
<dbReference type="GO" id="GO:0006229">
    <property type="term" value="P:dUTP biosynthetic process"/>
    <property type="evidence" value="ECO:0007669"/>
    <property type="project" value="UniProtKB-UniRule"/>
</dbReference>
<dbReference type="GO" id="GO:0015949">
    <property type="term" value="P:nucleobase-containing small molecule interconversion"/>
    <property type="evidence" value="ECO:0007669"/>
    <property type="project" value="TreeGrafter"/>
</dbReference>
<dbReference type="CDD" id="cd07557">
    <property type="entry name" value="trimeric_dUTPase"/>
    <property type="match status" value="1"/>
</dbReference>
<dbReference type="FunFam" id="2.70.40.10:FF:000001">
    <property type="entry name" value="dCTP deaminase"/>
    <property type="match status" value="1"/>
</dbReference>
<dbReference type="Gene3D" id="2.70.40.10">
    <property type="match status" value="1"/>
</dbReference>
<dbReference type="HAMAP" id="MF_00146">
    <property type="entry name" value="dCTP_deaminase"/>
    <property type="match status" value="1"/>
</dbReference>
<dbReference type="InterPro" id="IPR011962">
    <property type="entry name" value="dCTP_deaminase"/>
</dbReference>
<dbReference type="InterPro" id="IPR036157">
    <property type="entry name" value="dUTPase-like_sf"/>
</dbReference>
<dbReference type="InterPro" id="IPR033704">
    <property type="entry name" value="dUTPase_trimeric"/>
</dbReference>
<dbReference type="NCBIfam" id="TIGR02274">
    <property type="entry name" value="dCTP_deam"/>
    <property type="match status" value="1"/>
</dbReference>
<dbReference type="PANTHER" id="PTHR42680">
    <property type="entry name" value="DCTP DEAMINASE"/>
    <property type="match status" value="1"/>
</dbReference>
<dbReference type="PANTHER" id="PTHR42680:SF3">
    <property type="entry name" value="DCTP DEAMINASE"/>
    <property type="match status" value="1"/>
</dbReference>
<dbReference type="Pfam" id="PF22769">
    <property type="entry name" value="DCD"/>
    <property type="match status" value="1"/>
</dbReference>
<dbReference type="SUPFAM" id="SSF51283">
    <property type="entry name" value="dUTPase-like"/>
    <property type="match status" value="1"/>
</dbReference>
<accession>Q7M9A0</accession>
<feature type="chain" id="PRO_0000156019" description="dCTP deaminase">
    <location>
        <begin position="1"/>
        <end position="186"/>
    </location>
</feature>
<feature type="active site" description="Proton donor/acceptor" evidence="1">
    <location>
        <position position="133"/>
    </location>
</feature>
<feature type="binding site" evidence="1">
    <location>
        <begin position="107"/>
        <end position="112"/>
    </location>
    <ligand>
        <name>dCTP</name>
        <dbReference type="ChEBI" id="CHEBI:61481"/>
    </ligand>
</feature>
<feature type="binding site" evidence="1">
    <location>
        <position position="152"/>
    </location>
    <ligand>
        <name>dCTP</name>
        <dbReference type="ChEBI" id="CHEBI:61481"/>
    </ligand>
</feature>
<feature type="binding site" evidence="1">
    <location>
        <position position="166"/>
    </location>
    <ligand>
        <name>dCTP</name>
        <dbReference type="ChEBI" id="CHEBI:61481"/>
    </ligand>
</feature>
<feature type="binding site" evidence="1">
    <location>
        <position position="175"/>
    </location>
    <ligand>
        <name>dCTP</name>
        <dbReference type="ChEBI" id="CHEBI:61481"/>
    </ligand>
</feature>
<feature type="binding site" evidence="1">
    <location>
        <position position="176"/>
    </location>
    <ligand>
        <name>dCTP</name>
        <dbReference type="ChEBI" id="CHEBI:61481"/>
    </ligand>
</feature>
<organism>
    <name type="scientific">Wolinella succinogenes (strain ATCC 29543 / DSM 1740 / CCUG 13145 / JCM 31913 / LMG 7466 / NCTC 11488 / FDC 602W)</name>
    <name type="common">Vibrio succinogenes</name>
    <dbReference type="NCBI Taxonomy" id="273121"/>
    <lineage>
        <taxon>Bacteria</taxon>
        <taxon>Pseudomonadati</taxon>
        <taxon>Campylobacterota</taxon>
        <taxon>Epsilonproteobacteria</taxon>
        <taxon>Campylobacterales</taxon>
        <taxon>Helicobacteraceae</taxon>
        <taxon>Wolinella</taxon>
    </lineage>
</organism>
<name>DCD_WOLSU</name>
<keyword id="KW-0378">Hydrolase</keyword>
<keyword id="KW-0546">Nucleotide metabolism</keyword>
<keyword id="KW-0547">Nucleotide-binding</keyword>
<keyword id="KW-1185">Reference proteome</keyword>
<evidence type="ECO:0000255" key="1">
    <source>
        <dbReference type="HAMAP-Rule" id="MF_00146"/>
    </source>
</evidence>